<sequence>MKINFSLLDEPMEVNLGTVLVIEDVSVFAQLVKEFYQYDEQSNLTIFDSKIRSIRSSELLLITDILGYDINTSQVLKLLHTDIVSQLNDKPEVRSEIDSLVSLITDIIMAECIENELDIEYDEITLLELIKALGVRIETKSCTVFEKIFEILQIFKYLVKKRILVFVNSLSYFSKDEIYQILEYTKLSQADVLFLEPRQIEGIQQFILDKDYILMPYNN</sequence>
<keyword id="KW-0002">3D-structure</keyword>
<keyword id="KW-0051">Antiviral defense</keyword>
<keyword id="KW-0106">Calcium</keyword>
<keyword id="KW-0238">DNA-binding</keyword>
<keyword id="KW-0479">Metal-binding</keyword>
<name>CSN2_STRTR</name>
<proteinExistence type="evidence at protein level"/>
<dbReference type="EMBL" id="HQ712120">
    <property type="protein sequence ID" value="AEM62890.1"/>
    <property type="molecule type" value="Genomic_DNA"/>
</dbReference>
<dbReference type="RefSeq" id="WP_014608593.1">
    <property type="nucleotide sequence ID" value="NZ_WMLD01000001.1"/>
</dbReference>
<dbReference type="PDB" id="6QXF">
    <property type="method" value="EM"/>
    <property type="resolution" value="3.60 A"/>
    <property type="chains" value="A/B/C/D/E/F/G/H=1-219"/>
</dbReference>
<dbReference type="PDB" id="6QXT">
    <property type="method" value="EM"/>
    <property type="resolution" value="8.90 A"/>
    <property type="chains" value="A/B/C/D/E/F/G/H/a/b/c/d/e/f/g/h=1-219"/>
</dbReference>
<dbReference type="PDB" id="6QY3">
    <property type="method" value="EM"/>
    <property type="resolution" value="9.10 A"/>
    <property type="chains" value="A/B/C/D/E/F/G/H/a/b/c/d/e/f/g/h=1-219"/>
</dbReference>
<dbReference type="PDBsum" id="6QXF"/>
<dbReference type="PDBsum" id="6QXT"/>
<dbReference type="PDBsum" id="6QY3"/>
<dbReference type="EMDB" id="EMD-4668"/>
<dbReference type="EMDB" id="EMD-4670"/>
<dbReference type="EMDB" id="EMD-4671"/>
<dbReference type="SMR" id="G3ECR4"/>
<dbReference type="eggNOG" id="ENOG502ZVZK">
    <property type="taxonomic scope" value="Bacteria"/>
</dbReference>
<dbReference type="GO" id="GO:0003677">
    <property type="term" value="F:DNA binding"/>
    <property type="evidence" value="ECO:0007669"/>
    <property type="project" value="UniProtKB-KW"/>
</dbReference>
<dbReference type="GO" id="GO:0046872">
    <property type="term" value="F:metal ion binding"/>
    <property type="evidence" value="ECO:0007669"/>
    <property type="project" value="UniProtKB-KW"/>
</dbReference>
<dbReference type="GO" id="GO:0051607">
    <property type="term" value="P:defense response to virus"/>
    <property type="evidence" value="ECO:0007669"/>
    <property type="project" value="UniProtKB-KW"/>
</dbReference>
<dbReference type="CDD" id="cd09758">
    <property type="entry name" value="Csn2"/>
    <property type="match status" value="1"/>
</dbReference>
<dbReference type="Gene3D" id="3.40.50.11940">
    <property type="match status" value="2"/>
</dbReference>
<dbReference type="InterPro" id="IPR010146">
    <property type="entry name" value="CRISPR-assoc_prot_Csn2-typ"/>
</dbReference>
<dbReference type="InterPro" id="IPR038600">
    <property type="entry name" value="Csn2_sf"/>
</dbReference>
<dbReference type="NCBIfam" id="TIGR01866">
    <property type="entry name" value="cas_Csn2"/>
    <property type="match status" value="1"/>
</dbReference>
<dbReference type="Pfam" id="PF09711">
    <property type="entry name" value="Cas_Csn2"/>
    <property type="match status" value="1"/>
</dbReference>
<protein>
    <recommendedName>
        <fullName>CRISPR-associated protein Csn2</fullName>
    </recommendedName>
</protein>
<comment type="function">
    <text evidence="1 2 3">CRISPR (clustered regularly interspaced short palindromic repeat) is an adaptive immune system that provides protection against mobile genetic elements (viruses, transposable elements and conjugative plasmids). CRISPR clusters contain spacers, sequences complementary to antecedent mobile elements, and target invading nucleic acids. CRISPR clusters are transcribed and processed into CRISPR RNA (crRNA) (Probable). Binds dsDNA (By similarity). When the CRISPR3/cas system consisting of cas9-cas1-cas2-csn2-CRISPR3 or just cas9-CRISPR3 is expressed in E.coli it prevents plasmids homologous to spacers 1 or 2 from transforming.</text>
</comment>
<comment type="cofactor">
    <cofactor evidence="1">
        <name>Ca(2+)</name>
        <dbReference type="ChEBI" id="CHEBI:29108"/>
    </cofactor>
</comment>
<comment type="subunit">
    <text evidence="1">Homotetramer.</text>
</comment>
<comment type="disruption phenotype">
    <text evidence="2">Plasmid transformation is still inhibited.</text>
</comment>
<comment type="similarity">
    <text evidence="3">Belongs to the CRISPR-associated Csn2 protein family.</text>
</comment>
<accession>G3ECR4</accession>
<gene>
    <name type="primary">csn2</name>
</gene>
<feature type="chain" id="PRO_0000417880" description="CRISPR-associated protein Csn2">
    <location>
        <begin position="1"/>
        <end position="219"/>
    </location>
</feature>
<feature type="binding site" evidence="1">
    <location>
        <position position="138"/>
    </location>
    <ligand>
        <name>Ca(2+)</name>
        <dbReference type="ChEBI" id="CHEBI:29108"/>
    </ligand>
</feature>
<feature type="binding site" evidence="1">
    <location>
        <position position="150"/>
    </location>
    <ligand>
        <name>Ca(2+)</name>
        <dbReference type="ChEBI" id="CHEBI:29108"/>
    </ligand>
</feature>
<organism>
    <name type="scientific">Streptococcus thermophilus</name>
    <dbReference type="NCBI Taxonomy" id="1308"/>
    <lineage>
        <taxon>Bacteria</taxon>
        <taxon>Bacillati</taxon>
        <taxon>Bacillota</taxon>
        <taxon>Bacilli</taxon>
        <taxon>Lactobacillales</taxon>
        <taxon>Streptococcaceae</taxon>
        <taxon>Streptococcus</taxon>
    </lineage>
</organism>
<evidence type="ECO:0000250" key="1"/>
<evidence type="ECO:0000269" key="2">
    <source>
    </source>
</evidence>
<evidence type="ECO:0000305" key="3"/>
<reference key="1">
    <citation type="journal article" date="2011" name="Nucleic Acids Res.">
        <title>The Streptococcus thermophilus CRISPR/Cas system provides immunity in Escherichia coli.</title>
        <authorList>
            <person name="Sapranauskas R."/>
            <person name="Gasiunas G."/>
            <person name="Fremaux C."/>
            <person name="Barrangou R."/>
            <person name="Horvath P."/>
            <person name="Siksnys V."/>
        </authorList>
    </citation>
    <scope>NUCLEOTIDE SEQUENCE [GENOMIC DNA]</scope>
    <scope>FUNCTION IN PLASMID RESISTANCE</scope>
    <scope>EXPRESSION OF CRISPR3/CAS IN E.COLI</scope>
    <scope>DISRUPTION PHENOTYPE</scope>
    <source>
        <strain>DGCC7710</strain>
    </source>
</reference>